<comment type="function">
    <text evidence="1">Specifically methylates the guanine in position 1835 (m2G1835) of 23S rRNA.</text>
</comment>
<comment type="catalytic activity">
    <reaction evidence="1">
        <text>guanosine(1835) in 23S rRNA + S-adenosyl-L-methionine = N(2)-methylguanosine(1835) in 23S rRNA + S-adenosyl-L-homocysteine + H(+)</text>
        <dbReference type="Rhea" id="RHEA:42744"/>
        <dbReference type="Rhea" id="RHEA-COMP:10217"/>
        <dbReference type="Rhea" id="RHEA-COMP:10218"/>
        <dbReference type="ChEBI" id="CHEBI:15378"/>
        <dbReference type="ChEBI" id="CHEBI:57856"/>
        <dbReference type="ChEBI" id="CHEBI:59789"/>
        <dbReference type="ChEBI" id="CHEBI:74269"/>
        <dbReference type="ChEBI" id="CHEBI:74481"/>
        <dbReference type="EC" id="2.1.1.174"/>
    </reaction>
</comment>
<comment type="subcellular location">
    <subcellularLocation>
        <location evidence="1">Cytoplasm</location>
    </subcellularLocation>
</comment>
<comment type="similarity">
    <text evidence="1">Belongs to the methyltransferase superfamily. RlmG family.</text>
</comment>
<proteinExistence type="inferred from homology"/>
<evidence type="ECO:0000255" key="1">
    <source>
        <dbReference type="HAMAP-Rule" id="MF_01859"/>
    </source>
</evidence>
<dbReference type="EC" id="2.1.1.174" evidence="1"/>
<dbReference type="EMBL" id="FM178379">
    <property type="protein sequence ID" value="CAQ78632.1"/>
    <property type="molecule type" value="Genomic_DNA"/>
</dbReference>
<dbReference type="RefSeq" id="WP_012549717.1">
    <property type="nucleotide sequence ID" value="NC_011312.1"/>
</dbReference>
<dbReference type="SMR" id="B6EIC1"/>
<dbReference type="KEGG" id="vsa:VSAL_I0947"/>
<dbReference type="eggNOG" id="COG2813">
    <property type="taxonomic scope" value="Bacteria"/>
</dbReference>
<dbReference type="HOGENOM" id="CLU_040288_4_0_6"/>
<dbReference type="Proteomes" id="UP000001730">
    <property type="component" value="Chromosome 1"/>
</dbReference>
<dbReference type="GO" id="GO:0005737">
    <property type="term" value="C:cytoplasm"/>
    <property type="evidence" value="ECO:0007669"/>
    <property type="project" value="UniProtKB-SubCell"/>
</dbReference>
<dbReference type="GO" id="GO:0052916">
    <property type="term" value="F:23S rRNA (guanine(1835)-N(2))-methyltransferase activity"/>
    <property type="evidence" value="ECO:0007669"/>
    <property type="project" value="UniProtKB-EC"/>
</dbReference>
<dbReference type="CDD" id="cd02440">
    <property type="entry name" value="AdoMet_MTases"/>
    <property type="match status" value="1"/>
</dbReference>
<dbReference type="Gene3D" id="3.40.50.150">
    <property type="entry name" value="Vaccinia Virus protein VP39"/>
    <property type="match status" value="2"/>
</dbReference>
<dbReference type="HAMAP" id="MF_01859">
    <property type="entry name" value="23SrRNA_methyltr_G"/>
    <property type="match status" value="1"/>
</dbReference>
<dbReference type="InterPro" id="IPR017237">
    <property type="entry name" value="rRNA_m2G-MeTrfase_RlmG"/>
</dbReference>
<dbReference type="InterPro" id="IPR046977">
    <property type="entry name" value="RsmC/RlmG"/>
</dbReference>
<dbReference type="InterPro" id="IPR029063">
    <property type="entry name" value="SAM-dependent_MTases_sf"/>
</dbReference>
<dbReference type="InterPro" id="IPR007848">
    <property type="entry name" value="Small_mtfrase_dom"/>
</dbReference>
<dbReference type="PANTHER" id="PTHR47816:SF5">
    <property type="entry name" value="RIBOSOMAL RNA LARGE SUBUNIT METHYLTRANSFERASE G"/>
    <property type="match status" value="1"/>
</dbReference>
<dbReference type="PANTHER" id="PTHR47816">
    <property type="entry name" value="RIBOSOMAL RNA SMALL SUBUNIT METHYLTRANSFERASE C"/>
    <property type="match status" value="1"/>
</dbReference>
<dbReference type="Pfam" id="PF05175">
    <property type="entry name" value="MTS"/>
    <property type="match status" value="1"/>
</dbReference>
<dbReference type="PIRSF" id="PIRSF037565">
    <property type="entry name" value="RRNA_m2G_Mtase_RsmD_prd"/>
    <property type="match status" value="1"/>
</dbReference>
<dbReference type="SUPFAM" id="SSF53335">
    <property type="entry name" value="S-adenosyl-L-methionine-dependent methyltransferases"/>
    <property type="match status" value="1"/>
</dbReference>
<protein>
    <recommendedName>
        <fullName evidence="1">Ribosomal RNA large subunit methyltransferase G</fullName>
        <ecNumber evidence="1">2.1.1.174</ecNumber>
    </recommendedName>
    <alternativeName>
        <fullName evidence="1">23S rRNA m2G1835 methyltransferase</fullName>
    </alternativeName>
    <alternativeName>
        <fullName evidence="1">rRNA (guanine-N(2)-)-methyltransferase RlmG</fullName>
    </alternativeName>
</protein>
<gene>
    <name evidence="1" type="primary">rlmG</name>
    <name type="ordered locus">VSAL_I0947</name>
</gene>
<organism>
    <name type="scientific">Aliivibrio salmonicida (strain LFI1238)</name>
    <name type="common">Vibrio salmonicida (strain LFI1238)</name>
    <dbReference type="NCBI Taxonomy" id="316275"/>
    <lineage>
        <taxon>Bacteria</taxon>
        <taxon>Pseudomonadati</taxon>
        <taxon>Pseudomonadota</taxon>
        <taxon>Gammaproteobacteria</taxon>
        <taxon>Vibrionales</taxon>
        <taxon>Vibrionaceae</taxon>
        <taxon>Aliivibrio</taxon>
    </lineage>
</organism>
<accession>B6EIC1</accession>
<keyword id="KW-0963">Cytoplasm</keyword>
<keyword id="KW-0489">Methyltransferase</keyword>
<keyword id="KW-0698">rRNA processing</keyword>
<keyword id="KW-0949">S-adenosyl-L-methionine</keyword>
<keyword id="KW-0808">Transferase</keyword>
<name>RLMG_ALISL</name>
<reference key="1">
    <citation type="journal article" date="2008" name="BMC Genomics">
        <title>The genome sequence of the fish pathogen Aliivibrio salmonicida strain LFI1238 shows extensive evidence of gene decay.</title>
        <authorList>
            <person name="Hjerde E."/>
            <person name="Lorentzen M.S."/>
            <person name="Holden M.T."/>
            <person name="Seeger K."/>
            <person name="Paulsen S."/>
            <person name="Bason N."/>
            <person name="Churcher C."/>
            <person name="Harris D."/>
            <person name="Norbertczak H."/>
            <person name="Quail M.A."/>
            <person name="Sanders S."/>
            <person name="Thurston S."/>
            <person name="Parkhill J."/>
            <person name="Willassen N.P."/>
            <person name="Thomson N.R."/>
        </authorList>
    </citation>
    <scope>NUCLEOTIDE SEQUENCE [LARGE SCALE GENOMIC DNA]</scope>
    <source>
        <strain>LFI1238</strain>
    </source>
</reference>
<feature type="chain" id="PRO_0000366447" description="Ribosomal RNA large subunit methyltransferase G">
    <location>
        <begin position="1"/>
        <end position="382"/>
    </location>
</feature>
<sequence length="382" mass="43624">MKTELCLFDRTLNLQRYPKRAQELLQAWDAGDEFIIKHVEEELNLEDNKNILILNDNFGALSCWFSEKHNVTMMTDSFVSQRGTLKNLQRNQCNRVQLISSTEEMPEGFDLVIMQIPKNNRMLAWQLQQLRQSMTAECPIIAVNKAKEIHSSTLEVFEDYLGETKTSLAWKKHRLVFSNANATNPLTIAEAVCWSVDNEDIDLLNYPNVYSGERLDQGARFMLEHIPVDAELRHIIDLGCGNGVLSVKAAQLNPEARITCIDESFMAVESARRNLEVNLGKERQFQFIANNCLDGFKKHSSYLVLCNPPFHQGQAVTDHIAWQMFCDAKHILCKEGKLLVIGNRHLDYDDKLCRLFGEENVTTIASNSKFVILEAVKAEKSK</sequence>